<feature type="chain" id="PRO_0000193064" description="Anguibactin system regulator">
    <location>
        <begin position="1"/>
        <end position="1048"/>
    </location>
</feature>
<feature type="domain" description="Carrier" evidence="2">
    <location>
        <begin position="965"/>
        <end position="1039"/>
    </location>
</feature>
<keyword id="KW-0010">Activator</keyword>
<keyword id="KW-0238">DNA-binding</keyword>
<keyword id="KW-0406">Ion transport</keyword>
<keyword id="KW-0408">Iron</keyword>
<keyword id="KW-0410">Iron transport</keyword>
<keyword id="KW-0436">Ligase</keyword>
<keyword id="KW-0614">Plasmid</keyword>
<keyword id="KW-0804">Transcription</keyword>
<keyword id="KW-0805">Transcription regulation</keyword>
<keyword id="KW-0813">Transport</keyword>
<name>ANGR_VIBAN</name>
<accession>P0DJH0</accession>
<accession>P19828</accession>
<dbReference type="EMBL" id="Z12000">
    <property type="protein sequence ID" value="CAA78044.1"/>
    <property type="molecule type" value="Genomic_DNA"/>
</dbReference>
<dbReference type="PIR" id="JQ0416">
    <property type="entry name" value="YGVCAR"/>
</dbReference>
<dbReference type="RefSeq" id="WP_020977922.1">
    <property type="nucleotide sequence ID" value="NZ_VSLF01000048.1"/>
</dbReference>
<dbReference type="SMR" id="P0DJH0"/>
<dbReference type="UniPathway" id="UPA00016"/>
<dbReference type="GO" id="GO:0005737">
    <property type="term" value="C:cytoplasm"/>
    <property type="evidence" value="ECO:0007669"/>
    <property type="project" value="TreeGrafter"/>
</dbReference>
<dbReference type="GO" id="GO:0003677">
    <property type="term" value="F:DNA binding"/>
    <property type="evidence" value="ECO:0007669"/>
    <property type="project" value="UniProtKB-KW"/>
</dbReference>
<dbReference type="GO" id="GO:0016874">
    <property type="term" value="F:ligase activity"/>
    <property type="evidence" value="ECO:0007669"/>
    <property type="project" value="UniProtKB-KW"/>
</dbReference>
<dbReference type="GO" id="GO:0031177">
    <property type="term" value="F:phosphopantetheine binding"/>
    <property type="evidence" value="ECO:0007669"/>
    <property type="project" value="TreeGrafter"/>
</dbReference>
<dbReference type="GO" id="GO:0043041">
    <property type="term" value="P:amino acid activation for nonribosomal peptide biosynthetic process"/>
    <property type="evidence" value="ECO:0007669"/>
    <property type="project" value="TreeGrafter"/>
</dbReference>
<dbReference type="GO" id="GO:0006826">
    <property type="term" value="P:iron ion transport"/>
    <property type="evidence" value="ECO:0007669"/>
    <property type="project" value="UniProtKB-KW"/>
</dbReference>
<dbReference type="GO" id="GO:0044550">
    <property type="term" value="P:secondary metabolite biosynthetic process"/>
    <property type="evidence" value="ECO:0007669"/>
    <property type="project" value="TreeGrafter"/>
</dbReference>
<dbReference type="CDD" id="cd12114">
    <property type="entry name" value="A_NRPS_TlmIV_like"/>
    <property type="match status" value="1"/>
</dbReference>
<dbReference type="CDD" id="cd20480">
    <property type="entry name" value="ArgR-Cyc_NRPS-like"/>
    <property type="match status" value="1"/>
</dbReference>
<dbReference type="FunFam" id="3.40.50.12780:FF:000012">
    <property type="entry name" value="Non-ribosomal peptide synthetase"/>
    <property type="match status" value="1"/>
</dbReference>
<dbReference type="Gene3D" id="3.30.300.30">
    <property type="match status" value="1"/>
</dbReference>
<dbReference type="Gene3D" id="1.10.1200.10">
    <property type="entry name" value="ACP-like"/>
    <property type="match status" value="1"/>
</dbReference>
<dbReference type="Gene3D" id="3.30.559.10">
    <property type="entry name" value="Chloramphenicol acetyltransferase-like domain"/>
    <property type="match status" value="1"/>
</dbReference>
<dbReference type="Gene3D" id="3.40.50.12780">
    <property type="entry name" value="N-terminal domain of ligase-like"/>
    <property type="match status" value="1"/>
</dbReference>
<dbReference type="Gene3D" id="3.30.559.30">
    <property type="entry name" value="Nonribosomal peptide synthetase, condensation domain"/>
    <property type="match status" value="1"/>
</dbReference>
<dbReference type="InterPro" id="IPR010071">
    <property type="entry name" value="AA_adenyl_dom"/>
</dbReference>
<dbReference type="InterPro" id="IPR036736">
    <property type="entry name" value="ACP-like_sf"/>
</dbReference>
<dbReference type="InterPro" id="IPR025110">
    <property type="entry name" value="AMP-bd_C"/>
</dbReference>
<dbReference type="InterPro" id="IPR045851">
    <property type="entry name" value="AMP-bd_C_sf"/>
</dbReference>
<dbReference type="InterPro" id="IPR020845">
    <property type="entry name" value="AMP-binding_CS"/>
</dbReference>
<dbReference type="InterPro" id="IPR000873">
    <property type="entry name" value="AMP-dep_synth/lig_dom"/>
</dbReference>
<dbReference type="InterPro" id="IPR042099">
    <property type="entry name" value="ANL_N_sf"/>
</dbReference>
<dbReference type="InterPro" id="IPR023213">
    <property type="entry name" value="CAT-like_dom_sf"/>
</dbReference>
<dbReference type="InterPro" id="IPR001242">
    <property type="entry name" value="Condensatn"/>
</dbReference>
<dbReference type="InterPro" id="IPR009081">
    <property type="entry name" value="PP-bd_ACP"/>
</dbReference>
<dbReference type="NCBIfam" id="TIGR01733">
    <property type="entry name" value="AA-adenyl-dom"/>
    <property type="match status" value="1"/>
</dbReference>
<dbReference type="PANTHER" id="PTHR45527">
    <property type="entry name" value="NONRIBOSOMAL PEPTIDE SYNTHETASE"/>
    <property type="match status" value="1"/>
</dbReference>
<dbReference type="PANTHER" id="PTHR45527:SF10">
    <property type="entry name" value="PYOCHELIN SYNTHASE PCHF"/>
    <property type="match status" value="1"/>
</dbReference>
<dbReference type="Pfam" id="PF00501">
    <property type="entry name" value="AMP-binding"/>
    <property type="match status" value="1"/>
</dbReference>
<dbReference type="Pfam" id="PF13193">
    <property type="entry name" value="AMP-binding_C"/>
    <property type="match status" value="1"/>
</dbReference>
<dbReference type="Pfam" id="PF00668">
    <property type="entry name" value="Condensation"/>
    <property type="match status" value="1"/>
</dbReference>
<dbReference type="Pfam" id="PF00550">
    <property type="entry name" value="PP-binding"/>
    <property type="match status" value="1"/>
</dbReference>
<dbReference type="SUPFAM" id="SSF56801">
    <property type="entry name" value="Acetyl-CoA synthetase-like"/>
    <property type="match status" value="1"/>
</dbReference>
<dbReference type="SUPFAM" id="SSF47336">
    <property type="entry name" value="ACP-like"/>
    <property type="match status" value="1"/>
</dbReference>
<dbReference type="SUPFAM" id="SSF52777">
    <property type="entry name" value="CoA-dependent acyltransferases"/>
    <property type="match status" value="2"/>
</dbReference>
<dbReference type="PROSITE" id="PS00455">
    <property type="entry name" value="AMP_BINDING"/>
    <property type="match status" value="1"/>
</dbReference>
<dbReference type="PROSITE" id="PS50075">
    <property type="entry name" value="CARRIER"/>
    <property type="match status" value="1"/>
</dbReference>
<proteinExistence type="inferred from homology"/>
<reference key="1">
    <citation type="journal article" date="1993" name="Infect. Immun.">
        <title>A single amino acid change in AngR, a protein encoded by pJM1-like virulence plasmids, results in hyperproduction of anguibactin.</title>
        <authorList>
            <person name="Tolmasky M.E."/>
            <person name="Actis L.A."/>
            <person name="Crosa J.H."/>
        </authorList>
    </citation>
    <scope>NUCLEOTIDE SEQUENCE [GENOMIC DNA]</scope>
    <source>
        <strain>531A</strain>
    </source>
</reference>
<geneLocation type="plasmid">
    <name>pJHC1</name>
</geneLocation>
<comment type="function">
    <text evidence="1">Bifunctional protein that plays an essential role in virulence. Plays a role in both the production of the siderophore anguibactin and the regulation of iron transport genes (By similarity).</text>
</comment>
<comment type="pathway">
    <text>Siderophore biosynthesis; anguibactin biosynthesis.</text>
</comment>
<comment type="similarity">
    <text evidence="3">Belongs to the ATP-dependent AMP-binding enzyme family.</text>
</comment>
<comment type="caution">
    <text evidence="3">Lacks the conserved Ser at position 1000 required for covalent attachment of 4-phosphopantetheine.</text>
</comment>
<gene>
    <name type="primary">angR</name>
</gene>
<organism>
    <name type="scientific">Vibrio anguillarum</name>
    <name type="common">Listonella anguillarum</name>
    <dbReference type="NCBI Taxonomy" id="55601"/>
    <lineage>
        <taxon>Bacteria</taxon>
        <taxon>Pseudomonadati</taxon>
        <taxon>Pseudomonadota</taxon>
        <taxon>Gammaproteobacteria</taxon>
        <taxon>Vibrionales</taxon>
        <taxon>Vibrionaceae</taxon>
        <taxon>Vibrio</taxon>
    </lineage>
</organism>
<sequence length="1048" mass="118398">MNQNEHPFAFPETKLPLTSNQNWQLSTQRQRTEKKSITNFTYQEFDYENISRDTLERCLTTIIKHHPIFGAKLSDDFYLHFPSKTHIETFAVNDLSNALKQDIDKQLADTRSAVTKSRSQAIISIMFSILPKNIIRLHVRFNSVVVDNPSVTLFFEQLTQLLSGSPLSFLNQEQTISAYNHKVNNELLSVDLESARWNEYILTLPSSANLPTICEPEKLDETDITRRCITLSQRKWQQLVTVSKKHNVTPEITLASIFSTVLSLWGNQKYLMMRFDITKINDYTGIIGQFTEPLLVGMSGFEQSFLSLVKNNQKKFEEAYHYDVKVPVFQCVNKLSNISDSHRYPANITFSSELLNTNHSKKAVWGCRQSANTWLSLHAVIEQEQLVLQWDSQDAIFPKDMIKDMLHSYTDLLDLLSQKDVNWAQPLPTLLPKHQESIRNKINQQGDLELTKELLHQRFFKNVESTPNALAIIHGQESLDYITLASYAKSCAGALTEAGVKSGDRVAVTMNKGIGQIVAVLGILYAGAIYVPVSLDQPQERRESIYQGAGINVILINESDSKNSPSNDLFFFLDWQTAIKSEPMRSPQDVAPSQPAYIIYTSGSTGTPKGVVISHQGALNTCIAINRRYQIGKNDRVLALSALHFDLSVYDIFGLLSAGGTIVLVSELERRDPIAWCQAIEEHNVTMWNSVPALFDMLLTYATCFNSIAPSKLRLTMLSGDWIGLDLPQRYRNYRVDGQFIAMGGATEASIWSNVFDVEKVPMEWRSIPYGYPLPRQQYRVVDDLGRDCPDWVAGELWIGGDGIALGYFDDELKTQAQFLHIDGHAWYRTGDMGCYWPDGTLEFLGRRDKQVKVGGYRIELGEIEVALNNIPGVQRAVAIAVGNKDKTLAAFIVMDSEQAPIVTAPLDAEEVQLLLNKQLPNYMVPKRIIFLETFPLTANGKVDHKALTRMTNREKKTSQSINKPIITASEDRVAKIWNDVLGPTELYKSSDFFLSGGDAYNAIEVVKRCHKAGYLIKLSMLYRYSTIEAFAIIMDRCRLAPQEEAEL</sequence>
<protein>
    <recommendedName>
        <fullName>Anguibactin system regulator</fullName>
    </recommendedName>
</protein>
<evidence type="ECO:0000250" key="1"/>
<evidence type="ECO:0000255" key="2">
    <source>
        <dbReference type="PROSITE-ProRule" id="PRU00258"/>
    </source>
</evidence>
<evidence type="ECO:0000305" key="3"/>